<feature type="chain" id="PRO_0000129909" description="Small ribosomal subunit protein uS19">
    <location>
        <begin position="1" status="less than"/>
        <end position="19"/>
    </location>
</feature>
<feature type="non-terminal residue">
    <location>
        <position position="1"/>
    </location>
</feature>
<accession>O31159</accession>
<dbReference type="EMBL" id="AF031160">
    <property type="protein sequence ID" value="AAC35868.1"/>
    <property type="molecule type" value="Genomic_DNA"/>
</dbReference>
<dbReference type="STRING" id="2133.SCITRI_00335"/>
<dbReference type="GO" id="GO:1990904">
    <property type="term" value="C:ribonucleoprotein complex"/>
    <property type="evidence" value="ECO:0007669"/>
    <property type="project" value="UniProtKB-KW"/>
</dbReference>
<dbReference type="GO" id="GO:0005840">
    <property type="term" value="C:ribosome"/>
    <property type="evidence" value="ECO:0007669"/>
    <property type="project" value="UniProtKB-KW"/>
</dbReference>
<dbReference type="GO" id="GO:0019843">
    <property type="term" value="F:rRNA binding"/>
    <property type="evidence" value="ECO:0007669"/>
    <property type="project" value="UniProtKB-KW"/>
</dbReference>
<sequence length="19" mass="2190">EFSPTRKFGGHGDDKKKKK</sequence>
<evidence type="ECO:0000250" key="1"/>
<evidence type="ECO:0000305" key="2"/>
<reference key="1">
    <citation type="journal article" date="1998" name="J. Biol. Chem.">
        <title>Purification, cloning, and preliminary characterization of a Spiroplasma citri ribosomal protein with DNA binding capacity.</title>
        <authorList>
            <person name="Le Dantec L."/>
            <person name="Castroviejo M."/>
            <person name="Bove J.M."/>
            <person name="Saillard C."/>
        </authorList>
    </citation>
    <scope>NUCLEOTIDE SEQUENCE [GENOMIC DNA]</scope>
    <source>
        <strain>ATCC 27556 / NCPPB 2647 / R8A2</strain>
    </source>
</reference>
<proteinExistence type="inferred from homology"/>
<organism>
    <name type="scientific">Spiroplasma citri</name>
    <dbReference type="NCBI Taxonomy" id="2133"/>
    <lineage>
        <taxon>Bacteria</taxon>
        <taxon>Bacillati</taxon>
        <taxon>Mycoplasmatota</taxon>
        <taxon>Mollicutes</taxon>
        <taxon>Entomoplasmatales</taxon>
        <taxon>Spiroplasmataceae</taxon>
        <taxon>Spiroplasma</taxon>
    </lineage>
</organism>
<name>RS19_SPICI</name>
<keyword id="KW-0687">Ribonucleoprotein</keyword>
<keyword id="KW-0689">Ribosomal protein</keyword>
<keyword id="KW-0694">RNA-binding</keyword>
<keyword id="KW-0699">rRNA-binding</keyword>
<comment type="function">
    <text evidence="1">Protein S19 forms a complex with S13 that binds strongly to the 16S ribosomal RNA.</text>
</comment>
<comment type="similarity">
    <text evidence="2">Belongs to the universal ribosomal protein uS19 family.</text>
</comment>
<protein>
    <recommendedName>
        <fullName evidence="2">Small ribosomal subunit protein uS19</fullName>
    </recommendedName>
    <alternativeName>
        <fullName>30S ribosomal protein S19</fullName>
    </alternativeName>
</protein>
<gene>
    <name type="primary">rpsS</name>
</gene>